<evidence type="ECO:0000255" key="1">
    <source>
        <dbReference type="HAMAP-Rule" id="MF_01865"/>
    </source>
</evidence>
<evidence type="ECO:0000255" key="2">
    <source>
        <dbReference type="PROSITE-ProRule" id="PRU01266"/>
    </source>
</evidence>
<organism>
    <name type="scientific">Deinococcus geothermalis (strain DSM 11300 / CIP 105573 / AG-3a)</name>
    <dbReference type="NCBI Taxonomy" id="319795"/>
    <lineage>
        <taxon>Bacteria</taxon>
        <taxon>Thermotogati</taxon>
        <taxon>Deinococcota</taxon>
        <taxon>Deinococci</taxon>
        <taxon>Deinococcales</taxon>
        <taxon>Deinococcaceae</taxon>
        <taxon>Deinococcus</taxon>
    </lineage>
</organism>
<protein>
    <recommendedName>
        <fullName evidence="1">Ribosomal protein uS12 methylthiotransferase RimO</fullName>
        <shortName evidence="1">uS12 MTTase</shortName>
        <shortName evidence="1">uS12 methylthiotransferase</shortName>
        <ecNumber evidence="1">2.8.4.4</ecNumber>
    </recommendedName>
    <alternativeName>
        <fullName evidence="1">Ribosomal protein uS12 (aspartate-C(3))-methylthiotransferase</fullName>
    </alternativeName>
    <alternativeName>
        <fullName evidence="1">Ribosome maturation factor RimO</fullName>
    </alternativeName>
</protein>
<gene>
    <name evidence="1" type="primary">rimO</name>
    <name type="ordered locus">Dgeo_0375</name>
</gene>
<keyword id="KW-0004">4Fe-4S</keyword>
<keyword id="KW-0963">Cytoplasm</keyword>
<keyword id="KW-0408">Iron</keyword>
<keyword id="KW-0411">Iron-sulfur</keyword>
<keyword id="KW-0479">Metal-binding</keyword>
<keyword id="KW-0949">S-adenosyl-L-methionine</keyword>
<keyword id="KW-0808">Transferase</keyword>
<name>RIMO_DEIGD</name>
<dbReference type="EC" id="2.8.4.4" evidence="1"/>
<dbReference type="EMBL" id="CP000359">
    <property type="protein sequence ID" value="ABF44678.1"/>
    <property type="molecule type" value="Genomic_DNA"/>
</dbReference>
<dbReference type="RefSeq" id="WP_011529522.1">
    <property type="nucleotide sequence ID" value="NC_008025.1"/>
</dbReference>
<dbReference type="SMR" id="Q1J1F6"/>
<dbReference type="STRING" id="319795.Dgeo_0375"/>
<dbReference type="KEGG" id="dge:Dgeo_0375"/>
<dbReference type="eggNOG" id="COG0621">
    <property type="taxonomic scope" value="Bacteria"/>
</dbReference>
<dbReference type="HOGENOM" id="CLU_018697_0_0_0"/>
<dbReference type="Proteomes" id="UP000002431">
    <property type="component" value="Chromosome"/>
</dbReference>
<dbReference type="GO" id="GO:0005829">
    <property type="term" value="C:cytosol"/>
    <property type="evidence" value="ECO:0007669"/>
    <property type="project" value="TreeGrafter"/>
</dbReference>
<dbReference type="GO" id="GO:0051539">
    <property type="term" value="F:4 iron, 4 sulfur cluster binding"/>
    <property type="evidence" value="ECO:0007669"/>
    <property type="project" value="UniProtKB-UniRule"/>
</dbReference>
<dbReference type="GO" id="GO:0035599">
    <property type="term" value="F:aspartic acid methylthiotransferase activity"/>
    <property type="evidence" value="ECO:0007669"/>
    <property type="project" value="TreeGrafter"/>
</dbReference>
<dbReference type="GO" id="GO:0046872">
    <property type="term" value="F:metal ion binding"/>
    <property type="evidence" value="ECO:0007669"/>
    <property type="project" value="UniProtKB-KW"/>
</dbReference>
<dbReference type="GO" id="GO:0103039">
    <property type="term" value="F:protein methylthiotransferase activity"/>
    <property type="evidence" value="ECO:0007669"/>
    <property type="project" value="UniProtKB-EC"/>
</dbReference>
<dbReference type="GO" id="GO:0006400">
    <property type="term" value="P:tRNA modification"/>
    <property type="evidence" value="ECO:0007669"/>
    <property type="project" value="InterPro"/>
</dbReference>
<dbReference type="CDD" id="cd01335">
    <property type="entry name" value="Radical_SAM"/>
    <property type="match status" value="1"/>
</dbReference>
<dbReference type="FunFam" id="2.40.50.140:FF:000060">
    <property type="entry name" value="Ribosomal protein S12 methylthiotransferase RimO"/>
    <property type="match status" value="1"/>
</dbReference>
<dbReference type="FunFam" id="3.40.50.12160:FF:000002">
    <property type="entry name" value="Ribosomal protein S12 methylthiotransferase RimO"/>
    <property type="match status" value="1"/>
</dbReference>
<dbReference type="FunFam" id="3.80.30.20:FF:000001">
    <property type="entry name" value="tRNA-2-methylthio-N(6)-dimethylallyladenosine synthase 2"/>
    <property type="match status" value="1"/>
</dbReference>
<dbReference type="Gene3D" id="3.40.50.12160">
    <property type="entry name" value="Methylthiotransferase, N-terminal domain"/>
    <property type="match status" value="1"/>
</dbReference>
<dbReference type="Gene3D" id="2.40.50.140">
    <property type="entry name" value="Nucleic acid-binding proteins"/>
    <property type="match status" value="1"/>
</dbReference>
<dbReference type="Gene3D" id="3.80.30.20">
    <property type="entry name" value="tm_1862 like domain"/>
    <property type="match status" value="1"/>
</dbReference>
<dbReference type="HAMAP" id="MF_01865">
    <property type="entry name" value="MTTase_RimO"/>
    <property type="match status" value="1"/>
</dbReference>
<dbReference type="InterPro" id="IPR006638">
    <property type="entry name" value="Elp3/MiaA/NifB-like_rSAM"/>
</dbReference>
<dbReference type="InterPro" id="IPR005839">
    <property type="entry name" value="Methylthiotransferase"/>
</dbReference>
<dbReference type="InterPro" id="IPR020612">
    <property type="entry name" value="Methylthiotransferase_CS"/>
</dbReference>
<dbReference type="InterPro" id="IPR013848">
    <property type="entry name" value="Methylthiotransferase_N"/>
</dbReference>
<dbReference type="InterPro" id="IPR038135">
    <property type="entry name" value="Methylthiotransferase_N_sf"/>
</dbReference>
<dbReference type="InterPro" id="IPR012340">
    <property type="entry name" value="NA-bd_OB-fold"/>
</dbReference>
<dbReference type="InterPro" id="IPR005840">
    <property type="entry name" value="Ribosomal_uS12_MeSTrfase_RimO"/>
</dbReference>
<dbReference type="InterPro" id="IPR007197">
    <property type="entry name" value="rSAM"/>
</dbReference>
<dbReference type="InterPro" id="IPR023404">
    <property type="entry name" value="rSAM_horseshoe"/>
</dbReference>
<dbReference type="InterPro" id="IPR002792">
    <property type="entry name" value="TRAM_dom"/>
</dbReference>
<dbReference type="NCBIfam" id="TIGR01125">
    <property type="entry name" value="30S ribosomal protein S12 methylthiotransferase RimO"/>
    <property type="match status" value="1"/>
</dbReference>
<dbReference type="NCBIfam" id="TIGR00089">
    <property type="entry name" value="MiaB/RimO family radical SAM methylthiotransferase"/>
    <property type="match status" value="1"/>
</dbReference>
<dbReference type="PANTHER" id="PTHR43837">
    <property type="entry name" value="RIBOSOMAL PROTEIN S12 METHYLTHIOTRANSFERASE RIMO"/>
    <property type="match status" value="1"/>
</dbReference>
<dbReference type="PANTHER" id="PTHR43837:SF1">
    <property type="entry name" value="RIBOSOMAL PROTEIN US12 METHYLTHIOTRANSFERASE RIMO"/>
    <property type="match status" value="1"/>
</dbReference>
<dbReference type="Pfam" id="PF04055">
    <property type="entry name" value="Radical_SAM"/>
    <property type="match status" value="1"/>
</dbReference>
<dbReference type="Pfam" id="PF18693">
    <property type="entry name" value="TRAM_2"/>
    <property type="match status" value="1"/>
</dbReference>
<dbReference type="Pfam" id="PF00919">
    <property type="entry name" value="UPF0004"/>
    <property type="match status" value="1"/>
</dbReference>
<dbReference type="SFLD" id="SFLDG01082">
    <property type="entry name" value="B12-binding_domain_containing"/>
    <property type="match status" value="1"/>
</dbReference>
<dbReference type="SFLD" id="SFLDS00029">
    <property type="entry name" value="Radical_SAM"/>
    <property type="match status" value="1"/>
</dbReference>
<dbReference type="SFLD" id="SFLDF00274">
    <property type="entry name" value="ribosomal_protein_S12_methylth"/>
    <property type="match status" value="1"/>
</dbReference>
<dbReference type="SMART" id="SM00729">
    <property type="entry name" value="Elp3"/>
    <property type="match status" value="1"/>
</dbReference>
<dbReference type="SUPFAM" id="SSF102114">
    <property type="entry name" value="Radical SAM enzymes"/>
    <property type="match status" value="1"/>
</dbReference>
<dbReference type="PROSITE" id="PS51449">
    <property type="entry name" value="MTTASE_N"/>
    <property type="match status" value="1"/>
</dbReference>
<dbReference type="PROSITE" id="PS01278">
    <property type="entry name" value="MTTASE_RADICAL"/>
    <property type="match status" value="1"/>
</dbReference>
<dbReference type="PROSITE" id="PS51918">
    <property type="entry name" value="RADICAL_SAM"/>
    <property type="match status" value="1"/>
</dbReference>
<dbReference type="PROSITE" id="PS50926">
    <property type="entry name" value="TRAM"/>
    <property type="match status" value="1"/>
</dbReference>
<reference key="1">
    <citation type="submission" date="2006-04" db="EMBL/GenBank/DDBJ databases">
        <title>Complete sequence of chromosome of Deinococcus geothermalis DSM 11300.</title>
        <authorList>
            <person name="Copeland A."/>
            <person name="Lucas S."/>
            <person name="Lapidus A."/>
            <person name="Barry K."/>
            <person name="Detter J.C."/>
            <person name="Glavina del Rio T."/>
            <person name="Hammon N."/>
            <person name="Israni S."/>
            <person name="Dalin E."/>
            <person name="Tice H."/>
            <person name="Pitluck S."/>
            <person name="Brettin T."/>
            <person name="Bruce D."/>
            <person name="Han C."/>
            <person name="Tapia R."/>
            <person name="Saunders E."/>
            <person name="Gilna P."/>
            <person name="Schmutz J."/>
            <person name="Larimer F."/>
            <person name="Land M."/>
            <person name="Hauser L."/>
            <person name="Kyrpides N."/>
            <person name="Kim E."/>
            <person name="Daly M.J."/>
            <person name="Fredrickson J.K."/>
            <person name="Makarova K.S."/>
            <person name="Gaidamakova E.K."/>
            <person name="Zhai M."/>
            <person name="Richardson P."/>
        </authorList>
    </citation>
    <scope>NUCLEOTIDE SEQUENCE [LARGE SCALE GENOMIC DNA]</scope>
    <source>
        <strain>DSM 11300 / CIP 105573 / AG-3a</strain>
    </source>
</reference>
<feature type="chain" id="PRO_0000374799" description="Ribosomal protein uS12 methylthiotransferase RimO">
    <location>
        <begin position="1"/>
        <end position="485"/>
    </location>
</feature>
<feature type="domain" description="MTTase N-terminal" evidence="1">
    <location>
        <begin position="14"/>
        <end position="124"/>
    </location>
</feature>
<feature type="domain" description="Radical SAM core" evidence="2">
    <location>
        <begin position="153"/>
        <end position="389"/>
    </location>
</feature>
<feature type="domain" description="TRAM" evidence="1">
    <location>
        <begin position="392"/>
        <end position="468"/>
    </location>
</feature>
<feature type="binding site" evidence="1">
    <location>
        <position position="23"/>
    </location>
    <ligand>
        <name>[4Fe-4S] cluster</name>
        <dbReference type="ChEBI" id="CHEBI:49883"/>
        <label>1</label>
    </ligand>
</feature>
<feature type="binding site" evidence="1">
    <location>
        <position position="59"/>
    </location>
    <ligand>
        <name>[4Fe-4S] cluster</name>
        <dbReference type="ChEBI" id="CHEBI:49883"/>
        <label>1</label>
    </ligand>
</feature>
<feature type="binding site" evidence="1">
    <location>
        <position position="88"/>
    </location>
    <ligand>
        <name>[4Fe-4S] cluster</name>
        <dbReference type="ChEBI" id="CHEBI:49883"/>
        <label>1</label>
    </ligand>
</feature>
<feature type="binding site" evidence="1">
    <location>
        <position position="167"/>
    </location>
    <ligand>
        <name>[4Fe-4S] cluster</name>
        <dbReference type="ChEBI" id="CHEBI:49883"/>
        <label>2</label>
        <note>4Fe-4S-S-AdoMet</note>
    </ligand>
</feature>
<feature type="binding site" evidence="1">
    <location>
        <position position="171"/>
    </location>
    <ligand>
        <name>[4Fe-4S] cluster</name>
        <dbReference type="ChEBI" id="CHEBI:49883"/>
        <label>2</label>
        <note>4Fe-4S-S-AdoMet</note>
    </ligand>
</feature>
<feature type="binding site" evidence="1">
    <location>
        <position position="174"/>
    </location>
    <ligand>
        <name>[4Fe-4S] cluster</name>
        <dbReference type="ChEBI" id="CHEBI:49883"/>
        <label>2</label>
        <note>4Fe-4S-S-AdoMet</note>
    </ligand>
</feature>
<sequence length="485" mass="53706">MTRTQEPLPTVAAPKVGFISLGCPKALVDSERILTQLRAEGYEVAPNYEDAQAVIVNTCGFITPAVEESLSAIGEALDATGKVIVTGCLGERPEKILERHPKVAAITGSEAVDDVMAHVRELLPIELDPFTGLLPVAAPGMRQGDTLAPSVKLTPRHYAYVKIAEGCNHTCSFCIIPKLRGRQVSRDAGAVLYEAYRLIAGGTKELMIISQDTSAYGVDLRHRTSEFQGEQVRAHLIDLAEKLGEMGAWVRMHYVYPYPHVERIVELMSQGKILPYLDVPLQHASPAVLKRMRRPGAGKQLDTIRRWREICPELVIRSTFIVGFPGETEEDFQLLLDFLEEARLDRVGAFTYSDVEEADANALDGAIPEEVKQERLARFMEVAQRISREKLAEKVGRVLDVIIDEFNDDEGDEPGTRLIGRTKGDAPGIDGQVYLYAGDFAGQVKIGDIVQARIEDSDEYDLYGEVIHTPEWRPNVPLLGHFGKH</sequence>
<comment type="function">
    <text evidence="1">Catalyzes the methylthiolation of an aspartic acid residue of ribosomal protein uS12.</text>
</comment>
<comment type="catalytic activity">
    <reaction evidence="1">
        <text>L-aspartate(89)-[ribosomal protein uS12]-hydrogen + (sulfur carrier)-SH + AH2 + 2 S-adenosyl-L-methionine = 3-methylsulfanyl-L-aspartate(89)-[ribosomal protein uS12]-hydrogen + (sulfur carrier)-H + 5'-deoxyadenosine + L-methionine + A + S-adenosyl-L-homocysteine + 2 H(+)</text>
        <dbReference type="Rhea" id="RHEA:37087"/>
        <dbReference type="Rhea" id="RHEA-COMP:10460"/>
        <dbReference type="Rhea" id="RHEA-COMP:10461"/>
        <dbReference type="Rhea" id="RHEA-COMP:14737"/>
        <dbReference type="Rhea" id="RHEA-COMP:14739"/>
        <dbReference type="ChEBI" id="CHEBI:13193"/>
        <dbReference type="ChEBI" id="CHEBI:15378"/>
        <dbReference type="ChEBI" id="CHEBI:17319"/>
        <dbReference type="ChEBI" id="CHEBI:17499"/>
        <dbReference type="ChEBI" id="CHEBI:29917"/>
        <dbReference type="ChEBI" id="CHEBI:29961"/>
        <dbReference type="ChEBI" id="CHEBI:57844"/>
        <dbReference type="ChEBI" id="CHEBI:57856"/>
        <dbReference type="ChEBI" id="CHEBI:59789"/>
        <dbReference type="ChEBI" id="CHEBI:64428"/>
        <dbReference type="ChEBI" id="CHEBI:73599"/>
        <dbReference type="EC" id="2.8.4.4"/>
    </reaction>
</comment>
<comment type="cofactor">
    <cofactor evidence="1">
        <name>[4Fe-4S] cluster</name>
        <dbReference type="ChEBI" id="CHEBI:49883"/>
    </cofactor>
    <text evidence="1">Binds 2 [4Fe-4S] clusters. One cluster is coordinated with 3 cysteines and an exchangeable S-adenosyl-L-methionine.</text>
</comment>
<comment type="subcellular location">
    <subcellularLocation>
        <location evidence="1">Cytoplasm</location>
    </subcellularLocation>
</comment>
<comment type="similarity">
    <text evidence="1">Belongs to the methylthiotransferase family. RimO subfamily.</text>
</comment>
<proteinExistence type="inferred from homology"/>
<accession>Q1J1F6</accession>